<gene>
    <name evidence="1" type="primary">rpsI</name>
    <name type="ordered locus">Tola_2921</name>
</gene>
<reference key="1">
    <citation type="submission" date="2009-05" db="EMBL/GenBank/DDBJ databases">
        <title>Complete sequence of Tolumonas auensis DSM 9187.</title>
        <authorList>
            <consortium name="US DOE Joint Genome Institute"/>
            <person name="Lucas S."/>
            <person name="Copeland A."/>
            <person name="Lapidus A."/>
            <person name="Glavina del Rio T."/>
            <person name="Tice H."/>
            <person name="Bruce D."/>
            <person name="Goodwin L."/>
            <person name="Pitluck S."/>
            <person name="Chertkov O."/>
            <person name="Brettin T."/>
            <person name="Detter J.C."/>
            <person name="Han C."/>
            <person name="Larimer F."/>
            <person name="Land M."/>
            <person name="Hauser L."/>
            <person name="Kyrpides N."/>
            <person name="Mikhailova N."/>
            <person name="Spring S."/>
            <person name="Beller H."/>
        </authorList>
    </citation>
    <scope>NUCLEOTIDE SEQUENCE [LARGE SCALE GENOMIC DNA]</scope>
    <source>
        <strain>DSM 9187 / NBRC 110442 / TA 4</strain>
    </source>
</reference>
<keyword id="KW-1185">Reference proteome</keyword>
<keyword id="KW-0687">Ribonucleoprotein</keyword>
<keyword id="KW-0689">Ribosomal protein</keyword>
<organism>
    <name type="scientific">Tolumonas auensis (strain DSM 9187 / NBRC 110442 / TA 4)</name>
    <dbReference type="NCBI Taxonomy" id="595494"/>
    <lineage>
        <taxon>Bacteria</taxon>
        <taxon>Pseudomonadati</taxon>
        <taxon>Pseudomonadota</taxon>
        <taxon>Gammaproteobacteria</taxon>
        <taxon>Aeromonadales</taxon>
        <taxon>Aeromonadaceae</taxon>
        <taxon>Tolumonas</taxon>
    </lineage>
</organism>
<name>RS9_TOLAT</name>
<dbReference type="EMBL" id="CP001616">
    <property type="protein sequence ID" value="ACQ94510.1"/>
    <property type="molecule type" value="Genomic_DNA"/>
</dbReference>
<dbReference type="RefSeq" id="WP_015879959.1">
    <property type="nucleotide sequence ID" value="NC_012691.1"/>
</dbReference>
<dbReference type="SMR" id="C4LCK6"/>
<dbReference type="STRING" id="595494.Tola_2921"/>
<dbReference type="KEGG" id="tau:Tola_2921"/>
<dbReference type="eggNOG" id="COG0103">
    <property type="taxonomic scope" value="Bacteria"/>
</dbReference>
<dbReference type="HOGENOM" id="CLU_046483_2_1_6"/>
<dbReference type="OrthoDB" id="9803965at2"/>
<dbReference type="Proteomes" id="UP000009073">
    <property type="component" value="Chromosome"/>
</dbReference>
<dbReference type="GO" id="GO:0022627">
    <property type="term" value="C:cytosolic small ribosomal subunit"/>
    <property type="evidence" value="ECO:0007669"/>
    <property type="project" value="TreeGrafter"/>
</dbReference>
<dbReference type="GO" id="GO:0003723">
    <property type="term" value="F:RNA binding"/>
    <property type="evidence" value="ECO:0007669"/>
    <property type="project" value="TreeGrafter"/>
</dbReference>
<dbReference type="GO" id="GO:0003735">
    <property type="term" value="F:structural constituent of ribosome"/>
    <property type="evidence" value="ECO:0007669"/>
    <property type="project" value="InterPro"/>
</dbReference>
<dbReference type="GO" id="GO:0006412">
    <property type="term" value="P:translation"/>
    <property type="evidence" value="ECO:0007669"/>
    <property type="project" value="UniProtKB-UniRule"/>
</dbReference>
<dbReference type="FunFam" id="3.30.230.10:FF:000001">
    <property type="entry name" value="30S ribosomal protein S9"/>
    <property type="match status" value="1"/>
</dbReference>
<dbReference type="Gene3D" id="3.30.230.10">
    <property type="match status" value="1"/>
</dbReference>
<dbReference type="HAMAP" id="MF_00532_B">
    <property type="entry name" value="Ribosomal_uS9_B"/>
    <property type="match status" value="1"/>
</dbReference>
<dbReference type="InterPro" id="IPR020568">
    <property type="entry name" value="Ribosomal_Su5_D2-typ_SF"/>
</dbReference>
<dbReference type="InterPro" id="IPR000754">
    <property type="entry name" value="Ribosomal_uS9"/>
</dbReference>
<dbReference type="InterPro" id="IPR023035">
    <property type="entry name" value="Ribosomal_uS9_bac/plastid"/>
</dbReference>
<dbReference type="InterPro" id="IPR020574">
    <property type="entry name" value="Ribosomal_uS9_CS"/>
</dbReference>
<dbReference type="InterPro" id="IPR014721">
    <property type="entry name" value="Ribsml_uS5_D2-typ_fold_subgr"/>
</dbReference>
<dbReference type="NCBIfam" id="NF001099">
    <property type="entry name" value="PRK00132.1"/>
    <property type="match status" value="1"/>
</dbReference>
<dbReference type="PANTHER" id="PTHR21569">
    <property type="entry name" value="RIBOSOMAL PROTEIN S9"/>
    <property type="match status" value="1"/>
</dbReference>
<dbReference type="PANTHER" id="PTHR21569:SF1">
    <property type="entry name" value="SMALL RIBOSOMAL SUBUNIT PROTEIN US9M"/>
    <property type="match status" value="1"/>
</dbReference>
<dbReference type="Pfam" id="PF00380">
    <property type="entry name" value="Ribosomal_S9"/>
    <property type="match status" value="1"/>
</dbReference>
<dbReference type="SUPFAM" id="SSF54211">
    <property type="entry name" value="Ribosomal protein S5 domain 2-like"/>
    <property type="match status" value="1"/>
</dbReference>
<dbReference type="PROSITE" id="PS00360">
    <property type="entry name" value="RIBOSOMAL_S9"/>
    <property type="match status" value="1"/>
</dbReference>
<sequence length="130" mass="14574">MADNQYYGTGRRKSATARVFAKVGSGDIVINKRSLQDYFSRPTARMVVMQALELVDMTGKLDLYITVAGGGITGQAGAIRHGITRALMQYDESLRPTLRKAGFVTRDARRVERKKVGLHKARKRPQYSKR</sequence>
<evidence type="ECO:0000255" key="1">
    <source>
        <dbReference type="HAMAP-Rule" id="MF_00532"/>
    </source>
</evidence>
<evidence type="ECO:0000305" key="2"/>
<comment type="similarity">
    <text evidence="1">Belongs to the universal ribosomal protein uS9 family.</text>
</comment>
<proteinExistence type="inferred from homology"/>
<protein>
    <recommendedName>
        <fullName evidence="1">Small ribosomal subunit protein uS9</fullName>
    </recommendedName>
    <alternativeName>
        <fullName evidence="2">30S ribosomal protein S9</fullName>
    </alternativeName>
</protein>
<feature type="chain" id="PRO_1000211848" description="Small ribosomal subunit protein uS9">
    <location>
        <begin position="1"/>
        <end position="130"/>
    </location>
</feature>
<accession>C4LCK6</accession>